<reference key="1">
    <citation type="submission" date="2007-04" db="EMBL/GenBank/DDBJ databases">
        <title>Genome sequence of the thermophilic hydrogen-producing bacterium Caldicellulosiruptor saccharolyticus DSM 8903.</title>
        <authorList>
            <person name="Copeland A."/>
            <person name="Lucas S."/>
            <person name="Lapidus A."/>
            <person name="Barry K."/>
            <person name="Detter J.C."/>
            <person name="Glavina del Rio T."/>
            <person name="Hammon N."/>
            <person name="Israni S."/>
            <person name="Dalin E."/>
            <person name="Tice H."/>
            <person name="Pitluck S."/>
            <person name="Kiss H."/>
            <person name="Brettin T."/>
            <person name="Bruce D."/>
            <person name="Han C."/>
            <person name="Schmutz J."/>
            <person name="Larimer F."/>
            <person name="Land M."/>
            <person name="Hauser L."/>
            <person name="Kyrpides N."/>
            <person name="Lykidis A."/>
            <person name="van de Werken H.J.G."/>
            <person name="Verhaart M.R.A."/>
            <person name="VanFossen A.L."/>
            <person name="Lewis D.L."/>
            <person name="Nichols J.D."/>
            <person name="Goorissen H.P."/>
            <person name="van Niel E.W.J."/>
            <person name="Stams F.J.M."/>
            <person name="Willquist K.U."/>
            <person name="Ward D.E."/>
            <person name="van der Oost J."/>
            <person name="Kelly R.M."/>
            <person name="Kengen S.M.W."/>
            <person name="Richardson P."/>
        </authorList>
    </citation>
    <scope>NUCLEOTIDE SEQUENCE [LARGE SCALE GENOMIC DNA]</scope>
    <source>
        <strain>ATCC 43494 / DSM 8903 / Tp8T 6331</strain>
    </source>
</reference>
<proteinExistence type="inferred from homology"/>
<gene>
    <name evidence="1" type="primary">thiE</name>
    <name type="ordered locus">Csac_0254</name>
</gene>
<feature type="chain" id="PRO_0000336377" description="Thiamine-phosphate synthase">
    <location>
        <begin position="1"/>
        <end position="221"/>
    </location>
</feature>
<feature type="binding site" evidence="1">
    <location>
        <begin position="47"/>
        <end position="51"/>
    </location>
    <ligand>
        <name>4-amino-2-methyl-5-(diphosphooxymethyl)pyrimidine</name>
        <dbReference type="ChEBI" id="CHEBI:57841"/>
    </ligand>
</feature>
<feature type="binding site" evidence="1">
    <location>
        <position position="79"/>
    </location>
    <ligand>
        <name>4-amino-2-methyl-5-(diphosphooxymethyl)pyrimidine</name>
        <dbReference type="ChEBI" id="CHEBI:57841"/>
    </ligand>
</feature>
<feature type="binding site" evidence="1">
    <location>
        <position position="80"/>
    </location>
    <ligand>
        <name>Mg(2+)</name>
        <dbReference type="ChEBI" id="CHEBI:18420"/>
    </ligand>
</feature>
<feature type="binding site" evidence="1">
    <location>
        <position position="99"/>
    </location>
    <ligand>
        <name>Mg(2+)</name>
        <dbReference type="ChEBI" id="CHEBI:18420"/>
    </ligand>
</feature>
<feature type="binding site" evidence="1">
    <location>
        <position position="118"/>
    </location>
    <ligand>
        <name>4-amino-2-methyl-5-(diphosphooxymethyl)pyrimidine</name>
        <dbReference type="ChEBI" id="CHEBI:57841"/>
    </ligand>
</feature>
<feature type="binding site" evidence="1">
    <location>
        <begin position="144"/>
        <end position="146"/>
    </location>
    <ligand>
        <name>2-[(2R,5Z)-2-carboxy-4-methylthiazol-5(2H)-ylidene]ethyl phosphate</name>
        <dbReference type="ChEBI" id="CHEBI:62899"/>
    </ligand>
</feature>
<feature type="binding site" evidence="1">
    <location>
        <position position="147"/>
    </location>
    <ligand>
        <name>4-amino-2-methyl-5-(diphosphooxymethyl)pyrimidine</name>
        <dbReference type="ChEBI" id="CHEBI:57841"/>
    </ligand>
</feature>
<feature type="binding site" evidence="1">
    <location>
        <position position="175"/>
    </location>
    <ligand>
        <name>2-[(2R,5Z)-2-carboxy-4-methylthiazol-5(2H)-ylidene]ethyl phosphate</name>
        <dbReference type="ChEBI" id="CHEBI:62899"/>
    </ligand>
</feature>
<feature type="binding site" evidence="1">
    <location>
        <begin position="195"/>
        <end position="196"/>
    </location>
    <ligand>
        <name>2-[(2R,5Z)-2-carboxy-4-methylthiazol-5(2H)-ylidene]ethyl phosphate</name>
        <dbReference type="ChEBI" id="CHEBI:62899"/>
    </ligand>
</feature>
<name>THIE_CALS8</name>
<evidence type="ECO:0000255" key="1">
    <source>
        <dbReference type="HAMAP-Rule" id="MF_00097"/>
    </source>
</evidence>
<accession>A4XG66</accession>
<dbReference type="EC" id="2.5.1.3" evidence="1"/>
<dbReference type="EMBL" id="CP000679">
    <property type="protein sequence ID" value="ABP65901.2"/>
    <property type="molecule type" value="Genomic_DNA"/>
</dbReference>
<dbReference type="RefSeq" id="WP_011915867.1">
    <property type="nucleotide sequence ID" value="NC_009437.1"/>
</dbReference>
<dbReference type="SMR" id="A4XG66"/>
<dbReference type="STRING" id="351627.Csac_0254"/>
<dbReference type="KEGG" id="csc:Csac_0254"/>
<dbReference type="eggNOG" id="COG0352">
    <property type="taxonomic scope" value="Bacteria"/>
</dbReference>
<dbReference type="HOGENOM" id="CLU_018272_3_2_9"/>
<dbReference type="OrthoDB" id="9812206at2"/>
<dbReference type="UniPathway" id="UPA00060">
    <property type="reaction ID" value="UER00141"/>
</dbReference>
<dbReference type="Proteomes" id="UP000000256">
    <property type="component" value="Chromosome"/>
</dbReference>
<dbReference type="GO" id="GO:0005737">
    <property type="term" value="C:cytoplasm"/>
    <property type="evidence" value="ECO:0007669"/>
    <property type="project" value="TreeGrafter"/>
</dbReference>
<dbReference type="GO" id="GO:0000287">
    <property type="term" value="F:magnesium ion binding"/>
    <property type="evidence" value="ECO:0007669"/>
    <property type="project" value="UniProtKB-UniRule"/>
</dbReference>
<dbReference type="GO" id="GO:0004789">
    <property type="term" value="F:thiamine-phosphate diphosphorylase activity"/>
    <property type="evidence" value="ECO:0007669"/>
    <property type="project" value="UniProtKB-UniRule"/>
</dbReference>
<dbReference type="GO" id="GO:0009228">
    <property type="term" value="P:thiamine biosynthetic process"/>
    <property type="evidence" value="ECO:0007669"/>
    <property type="project" value="UniProtKB-KW"/>
</dbReference>
<dbReference type="GO" id="GO:0009229">
    <property type="term" value="P:thiamine diphosphate biosynthetic process"/>
    <property type="evidence" value="ECO:0007669"/>
    <property type="project" value="UniProtKB-UniRule"/>
</dbReference>
<dbReference type="CDD" id="cd00564">
    <property type="entry name" value="TMP_TenI"/>
    <property type="match status" value="1"/>
</dbReference>
<dbReference type="FunFam" id="3.20.20.70:FF:000096">
    <property type="entry name" value="Thiamine-phosphate synthase"/>
    <property type="match status" value="1"/>
</dbReference>
<dbReference type="Gene3D" id="3.20.20.70">
    <property type="entry name" value="Aldolase class I"/>
    <property type="match status" value="1"/>
</dbReference>
<dbReference type="HAMAP" id="MF_00097">
    <property type="entry name" value="TMP_synthase"/>
    <property type="match status" value="1"/>
</dbReference>
<dbReference type="InterPro" id="IPR013785">
    <property type="entry name" value="Aldolase_TIM"/>
</dbReference>
<dbReference type="InterPro" id="IPR036206">
    <property type="entry name" value="ThiamineP_synth_sf"/>
</dbReference>
<dbReference type="InterPro" id="IPR022998">
    <property type="entry name" value="ThiamineP_synth_TenI"/>
</dbReference>
<dbReference type="InterPro" id="IPR034291">
    <property type="entry name" value="TMP_synthase"/>
</dbReference>
<dbReference type="NCBIfam" id="TIGR00693">
    <property type="entry name" value="thiE"/>
    <property type="match status" value="1"/>
</dbReference>
<dbReference type="PANTHER" id="PTHR20857">
    <property type="entry name" value="THIAMINE-PHOSPHATE PYROPHOSPHORYLASE"/>
    <property type="match status" value="1"/>
</dbReference>
<dbReference type="PANTHER" id="PTHR20857:SF15">
    <property type="entry name" value="THIAMINE-PHOSPHATE SYNTHASE"/>
    <property type="match status" value="1"/>
</dbReference>
<dbReference type="Pfam" id="PF02581">
    <property type="entry name" value="TMP-TENI"/>
    <property type="match status" value="1"/>
</dbReference>
<dbReference type="SUPFAM" id="SSF51391">
    <property type="entry name" value="Thiamin phosphate synthase"/>
    <property type="match status" value="1"/>
</dbReference>
<sequence length="221" mass="24930">MSLSKEEKLQLFKSYNIYGLTAEKFSNGRSNIEVVKAMLESGIKIIQYREKHKSLKEKYEECLQIRELTKQYGALLIVNDHVDLCQMVGADGVHLGQEDYPAKEVRKILGEDFIIGVTTHTKEQVEKAVEDGADYIGLGPVFQSFTKDKPHPPIGLEMVRWAATYCKIPFVAIGGIKEHNLKDVLKAGAKCVSLVTEIVGSDDISQKIKKLWDIIKEFERS</sequence>
<comment type="function">
    <text evidence="1">Condenses 4-methyl-5-(beta-hydroxyethyl)thiazole monophosphate (THZ-P) and 2-methyl-4-amino-5-hydroxymethyl pyrimidine pyrophosphate (HMP-PP) to form thiamine monophosphate (TMP).</text>
</comment>
<comment type="catalytic activity">
    <reaction evidence="1">
        <text>2-[(2R,5Z)-2-carboxy-4-methylthiazol-5(2H)-ylidene]ethyl phosphate + 4-amino-2-methyl-5-(diphosphooxymethyl)pyrimidine + 2 H(+) = thiamine phosphate + CO2 + diphosphate</text>
        <dbReference type="Rhea" id="RHEA:47844"/>
        <dbReference type="ChEBI" id="CHEBI:15378"/>
        <dbReference type="ChEBI" id="CHEBI:16526"/>
        <dbReference type="ChEBI" id="CHEBI:33019"/>
        <dbReference type="ChEBI" id="CHEBI:37575"/>
        <dbReference type="ChEBI" id="CHEBI:57841"/>
        <dbReference type="ChEBI" id="CHEBI:62899"/>
        <dbReference type="EC" id="2.5.1.3"/>
    </reaction>
</comment>
<comment type="catalytic activity">
    <reaction evidence="1">
        <text>2-(2-carboxy-4-methylthiazol-5-yl)ethyl phosphate + 4-amino-2-methyl-5-(diphosphooxymethyl)pyrimidine + 2 H(+) = thiamine phosphate + CO2 + diphosphate</text>
        <dbReference type="Rhea" id="RHEA:47848"/>
        <dbReference type="ChEBI" id="CHEBI:15378"/>
        <dbReference type="ChEBI" id="CHEBI:16526"/>
        <dbReference type="ChEBI" id="CHEBI:33019"/>
        <dbReference type="ChEBI" id="CHEBI:37575"/>
        <dbReference type="ChEBI" id="CHEBI:57841"/>
        <dbReference type="ChEBI" id="CHEBI:62890"/>
        <dbReference type="EC" id="2.5.1.3"/>
    </reaction>
</comment>
<comment type="catalytic activity">
    <reaction evidence="1">
        <text>4-methyl-5-(2-phosphooxyethyl)-thiazole + 4-amino-2-methyl-5-(diphosphooxymethyl)pyrimidine + H(+) = thiamine phosphate + diphosphate</text>
        <dbReference type="Rhea" id="RHEA:22328"/>
        <dbReference type="ChEBI" id="CHEBI:15378"/>
        <dbReference type="ChEBI" id="CHEBI:33019"/>
        <dbReference type="ChEBI" id="CHEBI:37575"/>
        <dbReference type="ChEBI" id="CHEBI:57841"/>
        <dbReference type="ChEBI" id="CHEBI:58296"/>
        <dbReference type="EC" id="2.5.1.3"/>
    </reaction>
</comment>
<comment type="cofactor">
    <cofactor evidence="1">
        <name>Mg(2+)</name>
        <dbReference type="ChEBI" id="CHEBI:18420"/>
    </cofactor>
    <text evidence="1">Binds 1 Mg(2+) ion per subunit.</text>
</comment>
<comment type="pathway">
    <text evidence="1">Cofactor biosynthesis; thiamine diphosphate biosynthesis; thiamine phosphate from 4-amino-2-methyl-5-diphosphomethylpyrimidine and 4-methyl-5-(2-phosphoethyl)-thiazole: step 1/1.</text>
</comment>
<comment type="similarity">
    <text evidence="1">Belongs to the thiamine-phosphate synthase family.</text>
</comment>
<organism>
    <name type="scientific">Caldicellulosiruptor saccharolyticus (strain ATCC 43494 / DSM 8903 / Tp8T 6331)</name>
    <dbReference type="NCBI Taxonomy" id="351627"/>
    <lineage>
        <taxon>Bacteria</taxon>
        <taxon>Bacillati</taxon>
        <taxon>Bacillota</taxon>
        <taxon>Bacillota incertae sedis</taxon>
        <taxon>Caldicellulosiruptorales</taxon>
        <taxon>Caldicellulosiruptoraceae</taxon>
        <taxon>Caldicellulosiruptor</taxon>
    </lineage>
</organism>
<keyword id="KW-0460">Magnesium</keyword>
<keyword id="KW-0479">Metal-binding</keyword>
<keyword id="KW-0784">Thiamine biosynthesis</keyword>
<keyword id="KW-0808">Transferase</keyword>
<protein>
    <recommendedName>
        <fullName evidence="1">Thiamine-phosphate synthase</fullName>
        <shortName evidence="1">TP synthase</shortName>
        <shortName evidence="1">TPS</shortName>
        <ecNumber evidence="1">2.5.1.3</ecNumber>
    </recommendedName>
    <alternativeName>
        <fullName evidence="1">Thiamine-phosphate pyrophosphorylase</fullName>
        <shortName evidence="1">TMP pyrophosphorylase</shortName>
        <shortName evidence="1">TMP-PPase</shortName>
    </alternativeName>
</protein>